<evidence type="ECO:0000255" key="1">
    <source>
        <dbReference type="HAMAP-Rule" id="MF_00236"/>
    </source>
</evidence>
<evidence type="ECO:0000256" key="2">
    <source>
        <dbReference type="SAM" id="MobiDB-lite"/>
    </source>
</evidence>
<keyword id="KW-0997">Cell inner membrane</keyword>
<keyword id="KW-1003">Cell membrane</keyword>
<keyword id="KW-0472">Membrane</keyword>
<keyword id="KW-0653">Protein transport</keyword>
<keyword id="KW-1185">Reference proteome</keyword>
<keyword id="KW-0811">Translocation</keyword>
<keyword id="KW-0812">Transmembrane</keyword>
<keyword id="KW-1133">Transmembrane helix</keyword>
<keyword id="KW-0813">Transport</keyword>
<sequence>MGSFSIWHWLIVLVIVMLVFGTKKLRNIGQDLGGAVKGFKDGMKSAEDPNEQIPQSTTTAEKTVDVQAKDINK</sequence>
<name>TATA_POLAQ</name>
<dbReference type="EMBL" id="CP000655">
    <property type="protein sequence ID" value="ABP33338.1"/>
    <property type="molecule type" value="Genomic_DNA"/>
</dbReference>
<dbReference type="RefSeq" id="WP_011901963.1">
    <property type="nucleotide sequence ID" value="NC_009379.1"/>
</dbReference>
<dbReference type="SMR" id="A4SV24"/>
<dbReference type="GeneID" id="31480463"/>
<dbReference type="KEGG" id="pnu:Pnuc_0116"/>
<dbReference type="eggNOG" id="COG1826">
    <property type="taxonomic scope" value="Bacteria"/>
</dbReference>
<dbReference type="HOGENOM" id="CLU_086034_5_3_4"/>
<dbReference type="Proteomes" id="UP000000231">
    <property type="component" value="Chromosome"/>
</dbReference>
<dbReference type="GO" id="GO:0033281">
    <property type="term" value="C:TAT protein transport complex"/>
    <property type="evidence" value="ECO:0007669"/>
    <property type="project" value="UniProtKB-UniRule"/>
</dbReference>
<dbReference type="GO" id="GO:0008320">
    <property type="term" value="F:protein transmembrane transporter activity"/>
    <property type="evidence" value="ECO:0007669"/>
    <property type="project" value="UniProtKB-UniRule"/>
</dbReference>
<dbReference type="GO" id="GO:0043953">
    <property type="term" value="P:protein transport by the Tat complex"/>
    <property type="evidence" value="ECO:0007669"/>
    <property type="project" value="UniProtKB-UniRule"/>
</dbReference>
<dbReference type="Gene3D" id="1.20.5.3310">
    <property type="match status" value="1"/>
</dbReference>
<dbReference type="HAMAP" id="MF_00236">
    <property type="entry name" value="TatA_E"/>
    <property type="match status" value="1"/>
</dbReference>
<dbReference type="InterPro" id="IPR003369">
    <property type="entry name" value="TatA/B/E"/>
</dbReference>
<dbReference type="InterPro" id="IPR006312">
    <property type="entry name" value="TatA/E"/>
</dbReference>
<dbReference type="NCBIfam" id="NF002813">
    <property type="entry name" value="PRK02958.1"/>
    <property type="match status" value="1"/>
</dbReference>
<dbReference type="NCBIfam" id="TIGR01411">
    <property type="entry name" value="tatAE"/>
    <property type="match status" value="1"/>
</dbReference>
<dbReference type="PANTHER" id="PTHR42982">
    <property type="entry name" value="SEC-INDEPENDENT PROTEIN TRANSLOCASE PROTEIN TATA"/>
    <property type="match status" value="1"/>
</dbReference>
<dbReference type="PANTHER" id="PTHR42982:SF1">
    <property type="entry name" value="SEC-INDEPENDENT PROTEIN TRANSLOCASE PROTEIN TATA"/>
    <property type="match status" value="1"/>
</dbReference>
<dbReference type="Pfam" id="PF02416">
    <property type="entry name" value="TatA_B_E"/>
    <property type="match status" value="1"/>
</dbReference>
<accession>A4SV24</accession>
<protein>
    <recommendedName>
        <fullName evidence="1">Sec-independent protein translocase protein TatA</fullName>
    </recommendedName>
</protein>
<feature type="chain" id="PRO_1000078312" description="Sec-independent protein translocase protein TatA">
    <location>
        <begin position="1"/>
        <end position="73"/>
    </location>
</feature>
<feature type="transmembrane region" description="Helical" evidence="1">
    <location>
        <begin position="1"/>
        <end position="21"/>
    </location>
</feature>
<feature type="region of interest" description="Disordered" evidence="2">
    <location>
        <begin position="44"/>
        <end position="73"/>
    </location>
</feature>
<feature type="compositionally biased region" description="Polar residues" evidence="2">
    <location>
        <begin position="52"/>
        <end position="61"/>
    </location>
</feature>
<feature type="compositionally biased region" description="Basic and acidic residues" evidence="2">
    <location>
        <begin position="62"/>
        <end position="73"/>
    </location>
</feature>
<gene>
    <name evidence="1" type="primary">tatA</name>
    <name type="ordered locus">Pnuc_0116</name>
</gene>
<proteinExistence type="inferred from homology"/>
<organism>
    <name type="scientific">Polynucleobacter asymbioticus (strain DSM 18221 / CIP 109841 / QLW-P1DMWA-1)</name>
    <name type="common">Polynucleobacter necessarius subsp. asymbioticus</name>
    <dbReference type="NCBI Taxonomy" id="312153"/>
    <lineage>
        <taxon>Bacteria</taxon>
        <taxon>Pseudomonadati</taxon>
        <taxon>Pseudomonadota</taxon>
        <taxon>Betaproteobacteria</taxon>
        <taxon>Burkholderiales</taxon>
        <taxon>Burkholderiaceae</taxon>
        <taxon>Polynucleobacter</taxon>
    </lineage>
</organism>
<comment type="function">
    <text evidence="1">Part of the twin-arginine translocation (Tat) system that transports large folded proteins containing a characteristic twin-arginine motif in their signal peptide across membranes. TatA could form the protein-conducting channel of the Tat system.</text>
</comment>
<comment type="subunit">
    <text evidence="1">The Tat system comprises two distinct complexes: a TatABC complex, containing multiple copies of TatA, TatB and TatC subunits, and a separate TatA complex, containing only TatA subunits. Substrates initially bind to the TatABC complex, which probably triggers association of the separate TatA complex to form the active translocon.</text>
</comment>
<comment type="subcellular location">
    <subcellularLocation>
        <location evidence="1">Cell inner membrane</location>
        <topology evidence="1">Single-pass membrane protein</topology>
    </subcellularLocation>
</comment>
<comment type="similarity">
    <text evidence="1">Belongs to the TatA/E family.</text>
</comment>
<reference key="1">
    <citation type="journal article" date="2012" name="Stand. Genomic Sci.">
        <title>Complete genome sequence of Polynucleobacter necessarius subsp. asymbioticus type strain (QLW-P1DMWA-1(T)).</title>
        <authorList>
            <person name="Meincke L."/>
            <person name="Copeland A."/>
            <person name="Lapidus A."/>
            <person name="Lucas S."/>
            <person name="Berry K.W."/>
            <person name="Del Rio T.G."/>
            <person name="Hammon N."/>
            <person name="Dalin E."/>
            <person name="Tice H."/>
            <person name="Pitluck S."/>
            <person name="Richardson P."/>
            <person name="Bruce D."/>
            <person name="Goodwin L."/>
            <person name="Han C."/>
            <person name="Tapia R."/>
            <person name="Detter J.C."/>
            <person name="Schmutz J."/>
            <person name="Brettin T."/>
            <person name="Larimer F."/>
            <person name="Land M."/>
            <person name="Hauser L."/>
            <person name="Kyrpides N.C."/>
            <person name="Ivanova N."/>
            <person name="Goker M."/>
            <person name="Woyke T."/>
            <person name="Wu Q.L."/>
            <person name="Pockl M."/>
            <person name="Hahn M.W."/>
            <person name="Klenk H.P."/>
        </authorList>
    </citation>
    <scope>NUCLEOTIDE SEQUENCE [LARGE SCALE GENOMIC DNA]</scope>
    <source>
        <strain>DSM 18221 / CIP 109841 / QLW-P1DMWA-1</strain>
    </source>
</reference>